<dbReference type="EMBL" id="CP000786">
    <property type="protein sequence ID" value="ABZ98054.1"/>
    <property type="molecule type" value="Genomic_DNA"/>
</dbReference>
<dbReference type="RefSeq" id="WP_002973604.1">
    <property type="nucleotide sequence ID" value="NC_010602.1"/>
</dbReference>
<dbReference type="SMR" id="B0SSG4"/>
<dbReference type="STRING" id="456481.LEPBI_I1951"/>
<dbReference type="GeneID" id="93343063"/>
<dbReference type="KEGG" id="lbi:LEPBI_I1951"/>
<dbReference type="HOGENOM" id="CLU_098428_0_2_12"/>
<dbReference type="OrthoDB" id="9802617at2"/>
<dbReference type="BioCyc" id="LBIF456481:LEPBI_RS09640-MONOMER"/>
<dbReference type="Proteomes" id="UP000001847">
    <property type="component" value="Chromosome I"/>
</dbReference>
<dbReference type="GO" id="GO:1990904">
    <property type="term" value="C:ribonucleoprotein complex"/>
    <property type="evidence" value="ECO:0007669"/>
    <property type="project" value="UniProtKB-KW"/>
</dbReference>
<dbReference type="GO" id="GO:0005840">
    <property type="term" value="C:ribosome"/>
    <property type="evidence" value="ECO:0007669"/>
    <property type="project" value="UniProtKB-KW"/>
</dbReference>
<dbReference type="GO" id="GO:0019843">
    <property type="term" value="F:rRNA binding"/>
    <property type="evidence" value="ECO:0007669"/>
    <property type="project" value="UniProtKB-UniRule"/>
</dbReference>
<dbReference type="GO" id="GO:0003735">
    <property type="term" value="F:structural constituent of ribosome"/>
    <property type="evidence" value="ECO:0007669"/>
    <property type="project" value="InterPro"/>
</dbReference>
<dbReference type="GO" id="GO:0006412">
    <property type="term" value="P:translation"/>
    <property type="evidence" value="ECO:0007669"/>
    <property type="project" value="UniProtKB-UniRule"/>
</dbReference>
<dbReference type="FunFam" id="3.30.1370.30:FF:000002">
    <property type="entry name" value="30S ribosomal protein S8"/>
    <property type="match status" value="1"/>
</dbReference>
<dbReference type="FunFam" id="3.30.1490.10:FF:000001">
    <property type="entry name" value="30S ribosomal protein S8"/>
    <property type="match status" value="1"/>
</dbReference>
<dbReference type="Gene3D" id="3.30.1370.30">
    <property type="match status" value="1"/>
</dbReference>
<dbReference type="Gene3D" id="3.30.1490.10">
    <property type="match status" value="1"/>
</dbReference>
<dbReference type="HAMAP" id="MF_01302_B">
    <property type="entry name" value="Ribosomal_uS8_B"/>
    <property type="match status" value="1"/>
</dbReference>
<dbReference type="InterPro" id="IPR000630">
    <property type="entry name" value="Ribosomal_uS8"/>
</dbReference>
<dbReference type="InterPro" id="IPR047863">
    <property type="entry name" value="Ribosomal_uS8_CS"/>
</dbReference>
<dbReference type="InterPro" id="IPR035987">
    <property type="entry name" value="Ribosomal_uS8_sf"/>
</dbReference>
<dbReference type="NCBIfam" id="NF001109">
    <property type="entry name" value="PRK00136.1"/>
    <property type="match status" value="1"/>
</dbReference>
<dbReference type="PANTHER" id="PTHR11758">
    <property type="entry name" value="40S RIBOSOMAL PROTEIN S15A"/>
    <property type="match status" value="1"/>
</dbReference>
<dbReference type="Pfam" id="PF00410">
    <property type="entry name" value="Ribosomal_S8"/>
    <property type="match status" value="1"/>
</dbReference>
<dbReference type="SUPFAM" id="SSF56047">
    <property type="entry name" value="Ribosomal protein S8"/>
    <property type="match status" value="1"/>
</dbReference>
<dbReference type="PROSITE" id="PS00053">
    <property type="entry name" value="RIBOSOMAL_S8"/>
    <property type="match status" value="1"/>
</dbReference>
<accession>B0SSG4</accession>
<proteinExistence type="inferred from homology"/>
<protein>
    <recommendedName>
        <fullName evidence="1">Small ribosomal subunit protein uS8</fullName>
    </recommendedName>
    <alternativeName>
        <fullName evidence="2">30S ribosomal protein S8</fullName>
    </alternativeName>
</protein>
<name>RS8_LEPBP</name>
<reference key="1">
    <citation type="journal article" date="2008" name="PLoS ONE">
        <title>Genome sequence of the saprophyte Leptospira biflexa provides insights into the evolution of Leptospira and the pathogenesis of leptospirosis.</title>
        <authorList>
            <person name="Picardeau M."/>
            <person name="Bulach D.M."/>
            <person name="Bouchier C."/>
            <person name="Zuerner R.L."/>
            <person name="Zidane N."/>
            <person name="Wilson P.J."/>
            <person name="Creno S."/>
            <person name="Kuczek E.S."/>
            <person name="Bommezzadri S."/>
            <person name="Davis J.C."/>
            <person name="McGrath A."/>
            <person name="Johnson M.J."/>
            <person name="Boursaux-Eude C."/>
            <person name="Seemann T."/>
            <person name="Rouy Z."/>
            <person name="Coppel R.L."/>
            <person name="Rood J.I."/>
            <person name="Lajus A."/>
            <person name="Davies J.K."/>
            <person name="Medigue C."/>
            <person name="Adler B."/>
        </authorList>
    </citation>
    <scope>NUCLEOTIDE SEQUENCE [LARGE SCALE GENOMIC DNA]</scope>
    <source>
        <strain>Patoc 1 / ATCC 23582 / Paris</strain>
    </source>
</reference>
<evidence type="ECO:0000255" key="1">
    <source>
        <dbReference type="HAMAP-Rule" id="MF_01302"/>
    </source>
</evidence>
<evidence type="ECO:0000305" key="2"/>
<feature type="chain" id="PRO_1000140575" description="Small ribosomal subunit protein uS8">
    <location>
        <begin position="1"/>
        <end position="132"/>
    </location>
</feature>
<gene>
    <name evidence="1" type="primary">rpsH</name>
    <name type="ordered locus">LEPBI_I1951</name>
</gene>
<comment type="function">
    <text evidence="1">One of the primary rRNA binding proteins, it binds directly to 16S rRNA central domain where it helps coordinate assembly of the platform of the 30S subunit.</text>
</comment>
<comment type="subunit">
    <text evidence="1">Part of the 30S ribosomal subunit. Contacts proteins S5 and S12.</text>
</comment>
<comment type="similarity">
    <text evidence="1">Belongs to the universal ribosomal protein uS8 family.</text>
</comment>
<sequence length="132" mass="14893">MSLSDPIADMLTRIRNAQQAKHELCVIPGSKIKKSILDLLKEEGFVDDVQTVKNGSFDDFQVKLKYDTEKKPVIRMIERVSTPGRRVYIQSGEIRPFRNNIGTLILSTSKGVMTGKRARKLRVGGEVLCKVF</sequence>
<keyword id="KW-1185">Reference proteome</keyword>
<keyword id="KW-0687">Ribonucleoprotein</keyword>
<keyword id="KW-0689">Ribosomal protein</keyword>
<keyword id="KW-0694">RNA-binding</keyword>
<keyword id="KW-0699">rRNA-binding</keyword>
<organism>
    <name type="scientific">Leptospira biflexa serovar Patoc (strain Patoc 1 / ATCC 23582 / Paris)</name>
    <dbReference type="NCBI Taxonomy" id="456481"/>
    <lineage>
        <taxon>Bacteria</taxon>
        <taxon>Pseudomonadati</taxon>
        <taxon>Spirochaetota</taxon>
        <taxon>Spirochaetia</taxon>
        <taxon>Leptospirales</taxon>
        <taxon>Leptospiraceae</taxon>
        <taxon>Leptospira</taxon>
    </lineage>
</organism>